<proteinExistence type="inferred from homology"/>
<sequence length="579" mass="64713">MDYTEKLTRYVANFVDELAKSGVTDVVVSPGSRSTPLALVFTEHPSIKEWIIVDERSAAFFALGLAKKSNRAVAIVCTSGTAAANYYPAIVEAHYSRVPLLVLTADRPHELRHIGAPQTIEQIKMYGDYTKWFHEMAMPEASDKMLHYVRNKASHAKHVAEEGNPGVVHLNFPLREPLTPNFSLDAIWGTKSYTRQNIMQEGTKQLAPNQLQILLEEVGPNKKGLFVCGPQADAEFADAVTSLAGKWGIPVVADPLSQLRTGQHHKDNVIDGYDAFLREAEIRQELKPDYIIRFGAMPVSKSYLFYVMENVETQQYVIEPNEGIRDHSSNQTTFLFADPTTLCQQLEQMTVVDQDVSTAWLKTWQEMNQIAKHYLLEGVEEQITEGEAVRGLAEVIPDGSTLYVGNSMAIRDVDTFYMTSPKTINILANRGANGIDGMVSSGVGASADNERVTLLLGDLSLFHDMNGLFAAKHYKLPITIVLINNNGGGIFSFLPQAKDKRHFEALFGTPMDLSFEQVAKLYEANYNHVKTEEQLKAALYESYQLDGLSIIEVKTDREQNVQWHQAKWQLIKEAILKDG</sequence>
<evidence type="ECO:0000255" key="1">
    <source>
        <dbReference type="HAMAP-Rule" id="MF_01659"/>
    </source>
</evidence>
<reference key="1">
    <citation type="journal article" date="2002" name="Nucleic Acids Res.">
        <title>Genome sequence of Oceanobacillus iheyensis isolated from the Iheya Ridge and its unexpected adaptive capabilities to extreme environments.</title>
        <authorList>
            <person name="Takami H."/>
            <person name="Takaki Y."/>
            <person name="Uchiyama I."/>
        </authorList>
    </citation>
    <scope>NUCLEOTIDE SEQUENCE [LARGE SCALE GENOMIC DNA]</scope>
    <source>
        <strain>DSM 14371 / CIP 107618 / JCM 11309 / KCTC 3954 / HTE831</strain>
    </source>
</reference>
<name>MEND_OCEIH</name>
<protein>
    <recommendedName>
        <fullName evidence="1">2-succinyl-5-enolpyruvyl-6-hydroxy-3-cyclohexene-1-carboxylate synthase</fullName>
        <shortName evidence="1">SEPHCHC synthase</shortName>
        <ecNumber evidence="1">2.2.1.9</ecNumber>
    </recommendedName>
    <alternativeName>
        <fullName evidence="1">Menaquinone biosynthesis protein MenD</fullName>
    </alternativeName>
</protein>
<dbReference type="EC" id="2.2.1.9" evidence="1"/>
<dbReference type="EMBL" id="BA000028">
    <property type="protein sequence ID" value="BAC14281.1"/>
    <property type="molecule type" value="Genomic_DNA"/>
</dbReference>
<dbReference type="RefSeq" id="WP_011066718.1">
    <property type="nucleotide sequence ID" value="NC_004193.1"/>
</dbReference>
<dbReference type="SMR" id="Q8CZD8"/>
<dbReference type="STRING" id="221109.gene:10734576"/>
<dbReference type="KEGG" id="oih:OB2325"/>
<dbReference type="eggNOG" id="COG1165">
    <property type="taxonomic scope" value="Bacteria"/>
</dbReference>
<dbReference type="HOGENOM" id="CLU_006051_3_0_9"/>
<dbReference type="OrthoDB" id="9791859at2"/>
<dbReference type="PhylomeDB" id="Q8CZD8"/>
<dbReference type="UniPathway" id="UPA00079"/>
<dbReference type="UniPathway" id="UPA01057">
    <property type="reaction ID" value="UER00164"/>
</dbReference>
<dbReference type="Proteomes" id="UP000000822">
    <property type="component" value="Chromosome"/>
</dbReference>
<dbReference type="GO" id="GO:0070204">
    <property type="term" value="F:2-succinyl-5-enolpyruvyl-6-hydroxy-3-cyclohexene-1-carboxylic-acid synthase activity"/>
    <property type="evidence" value="ECO:0007669"/>
    <property type="project" value="UniProtKB-UniRule"/>
</dbReference>
<dbReference type="GO" id="GO:0000287">
    <property type="term" value="F:magnesium ion binding"/>
    <property type="evidence" value="ECO:0007669"/>
    <property type="project" value="UniProtKB-UniRule"/>
</dbReference>
<dbReference type="GO" id="GO:0030145">
    <property type="term" value="F:manganese ion binding"/>
    <property type="evidence" value="ECO:0007669"/>
    <property type="project" value="UniProtKB-UniRule"/>
</dbReference>
<dbReference type="GO" id="GO:0030976">
    <property type="term" value="F:thiamine pyrophosphate binding"/>
    <property type="evidence" value="ECO:0007669"/>
    <property type="project" value="UniProtKB-UniRule"/>
</dbReference>
<dbReference type="GO" id="GO:0009234">
    <property type="term" value="P:menaquinone biosynthetic process"/>
    <property type="evidence" value="ECO:0007669"/>
    <property type="project" value="UniProtKB-UniRule"/>
</dbReference>
<dbReference type="CDD" id="cd07037">
    <property type="entry name" value="TPP_PYR_MenD"/>
    <property type="match status" value="1"/>
</dbReference>
<dbReference type="CDD" id="cd02009">
    <property type="entry name" value="TPP_SHCHC_synthase"/>
    <property type="match status" value="1"/>
</dbReference>
<dbReference type="Gene3D" id="3.40.50.970">
    <property type="match status" value="2"/>
</dbReference>
<dbReference type="Gene3D" id="3.40.50.1220">
    <property type="entry name" value="TPP-binding domain"/>
    <property type="match status" value="1"/>
</dbReference>
<dbReference type="HAMAP" id="MF_01659">
    <property type="entry name" value="MenD"/>
    <property type="match status" value="1"/>
</dbReference>
<dbReference type="InterPro" id="IPR029035">
    <property type="entry name" value="DHS-like_NAD/FAD-binding_dom"/>
</dbReference>
<dbReference type="InterPro" id="IPR004433">
    <property type="entry name" value="MenaQ_synth_MenD"/>
</dbReference>
<dbReference type="InterPro" id="IPR032264">
    <property type="entry name" value="MenD_middle"/>
</dbReference>
<dbReference type="InterPro" id="IPR029061">
    <property type="entry name" value="THDP-binding"/>
</dbReference>
<dbReference type="InterPro" id="IPR012001">
    <property type="entry name" value="Thiamin_PyroP_enz_TPP-bd_dom"/>
</dbReference>
<dbReference type="InterPro" id="IPR011766">
    <property type="entry name" value="TPP_enzyme_TPP-bd"/>
</dbReference>
<dbReference type="NCBIfam" id="TIGR00173">
    <property type="entry name" value="menD"/>
    <property type="match status" value="1"/>
</dbReference>
<dbReference type="PANTHER" id="PTHR42916">
    <property type="entry name" value="2-SUCCINYL-5-ENOLPYRUVYL-6-HYDROXY-3-CYCLOHEXENE-1-CARBOXYLATE SYNTHASE"/>
    <property type="match status" value="1"/>
</dbReference>
<dbReference type="PANTHER" id="PTHR42916:SF1">
    <property type="entry name" value="PROTEIN PHYLLO, CHLOROPLASTIC"/>
    <property type="match status" value="1"/>
</dbReference>
<dbReference type="Pfam" id="PF02775">
    <property type="entry name" value="TPP_enzyme_C"/>
    <property type="match status" value="1"/>
</dbReference>
<dbReference type="Pfam" id="PF16582">
    <property type="entry name" value="TPP_enzyme_M_2"/>
    <property type="match status" value="1"/>
</dbReference>
<dbReference type="Pfam" id="PF02776">
    <property type="entry name" value="TPP_enzyme_N"/>
    <property type="match status" value="1"/>
</dbReference>
<dbReference type="PIRSF" id="PIRSF004983">
    <property type="entry name" value="MenD"/>
    <property type="match status" value="1"/>
</dbReference>
<dbReference type="SUPFAM" id="SSF52467">
    <property type="entry name" value="DHS-like NAD/FAD-binding domain"/>
    <property type="match status" value="1"/>
</dbReference>
<dbReference type="SUPFAM" id="SSF52518">
    <property type="entry name" value="Thiamin diphosphate-binding fold (THDP-binding)"/>
    <property type="match status" value="2"/>
</dbReference>
<gene>
    <name evidence="1" type="primary">menD</name>
    <name type="ordered locus">OB2325</name>
</gene>
<comment type="function">
    <text evidence="1">Catalyzes the thiamine diphosphate-dependent decarboxylation of 2-oxoglutarate and the subsequent addition of the resulting succinic semialdehyde-thiamine pyrophosphate anion to isochorismate to yield 2-succinyl-5-enolpyruvyl-6-hydroxy-3-cyclohexene-1-carboxylate (SEPHCHC).</text>
</comment>
<comment type="catalytic activity">
    <reaction evidence="1">
        <text>isochorismate + 2-oxoglutarate + H(+) = 5-enolpyruvoyl-6-hydroxy-2-succinyl-cyclohex-3-ene-1-carboxylate + CO2</text>
        <dbReference type="Rhea" id="RHEA:25593"/>
        <dbReference type="ChEBI" id="CHEBI:15378"/>
        <dbReference type="ChEBI" id="CHEBI:16526"/>
        <dbReference type="ChEBI" id="CHEBI:16810"/>
        <dbReference type="ChEBI" id="CHEBI:29780"/>
        <dbReference type="ChEBI" id="CHEBI:58818"/>
        <dbReference type="EC" id="2.2.1.9"/>
    </reaction>
</comment>
<comment type="cofactor">
    <cofactor evidence="1">
        <name>Mg(2+)</name>
        <dbReference type="ChEBI" id="CHEBI:18420"/>
    </cofactor>
    <cofactor evidence="1">
        <name>Mn(2+)</name>
        <dbReference type="ChEBI" id="CHEBI:29035"/>
    </cofactor>
</comment>
<comment type="cofactor">
    <cofactor evidence="1">
        <name>thiamine diphosphate</name>
        <dbReference type="ChEBI" id="CHEBI:58937"/>
    </cofactor>
    <text evidence="1">Binds 1 thiamine pyrophosphate per subunit.</text>
</comment>
<comment type="pathway">
    <text evidence="1">Quinol/quinone metabolism; 1,4-dihydroxy-2-naphthoate biosynthesis; 1,4-dihydroxy-2-naphthoate from chorismate: step 2/7.</text>
</comment>
<comment type="pathway">
    <text evidence="1">Quinol/quinone metabolism; menaquinone biosynthesis.</text>
</comment>
<comment type="subunit">
    <text evidence="1">Homodimer.</text>
</comment>
<comment type="similarity">
    <text evidence="1">Belongs to the TPP enzyme family. MenD subfamily.</text>
</comment>
<keyword id="KW-0460">Magnesium</keyword>
<keyword id="KW-0464">Manganese</keyword>
<keyword id="KW-0474">Menaquinone biosynthesis</keyword>
<keyword id="KW-0479">Metal-binding</keyword>
<keyword id="KW-1185">Reference proteome</keyword>
<keyword id="KW-0786">Thiamine pyrophosphate</keyword>
<keyword id="KW-0808">Transferase</keyword>
<feature type="chain" id="PRO_0000341792" description="2-succinyl-5-enolpyruvyl-6-hydroxy-3-cyclohexene-1-carboxylate synthase">
    <location>
        <begin position="1"/>
        <end position="579"/>
    </location>
</feature>
<accession>Q8CZD8</accession>
<organism>
    <name type="scientific">Oceanobacillus iheyensis (strain DSM 14371 / CIP 107618 / JCM 11309 / KCTC 3954 / HTE831)</name>
    <dbReference type="NCBI Taxonomy" id="221109"/>
    <lineage>
        <taxon>Bacteria</taxon>
        <taxon>Bacillati</taxon>
        <taxon>Bacillota</taxon>
        <taxon>Bacilli</taxon>
        <taxon>Bacillales</taxon>
        <taxon>Bacillaceae</taxon>
        <taxon>Oceanobacillus</taxon>
    </lineage>
</organism>